<keyword id="KW-0903">Direct protein sequencing</keyword>
<keyword id="KW-0325">Glycoprotein</keyword>
<keyword id="KW-0494">Milk protein</keyword>
<keyword id="KW-0597">Phosphoprotein</keyword>
<keyword id="KW-1185">Reference proteome</keyword>
<keyword id="KW-0964">Secreted</keyword>
<keyword id="KW-0732">Signal</keyword>
<evidence type="ECO:0000250" key="1"/>
<evidence type="ECO:0000250" key="2">
    <source>
        <dbReference type="UniProtKB" id="P02668"/>
    </source>
</evidence>
<evidence type="ECO:0000250" key="3">
    <source>
        <dbReference type="UniProtKB" id="P02670"/>
    </source>
</evidence>
<evidence type="ECO:0000269" key="4">
    <source>
    </source>
</evidence>
<evidence type="ECO:0000305" key="5"/>
<protein>
    <recommendedName>
        <fullName>Kappa-casein</fullName>
        <shortName>Kappa-CN</shortName>
    </recommendedName>
</protein>
<reference key="1">
    <citation type="journal article" date="2003" name="J. Dairy Res.">
        <title>Characterization of equine cDNA sequences for alphaS1-, beta- and kappa-casein.</title>
        <authorList>
            <person name="Lenasi T."/>
            <person name="Rogelj I."/>
            <person name="Dovc P."/>
        </authorList>
    </citation>
    <scope>NUCLEOTIDE SEQUENCE [MRNA]</scope>
    <source>
        <strain>Warmblood</strain>
        <tissue>Lactating mammary gland</tissue>
    </source>
</reference>
<reference key="2">
    <citation type="journal article" date="2001" name="J. Dairy Res.">
        <title>Primary structure of kappa-casein isolated from mares' milk.</title>
        <authorList>
            <person name="Iametti S."/>
            <person name="Tedeschi G."/>
            <person name="Oungre E."/>
            <person name="Bonomi F."/>
        </authorList>
    </citation>
    <scope>PROTEIN SEQUENCE OF 21-181</scope>
    <source>
        <tissue>Milk</tissue>
    </source>
</reference>
<sequence>MKSFFLVVNILALTLPFLGAEVQNQEQPTCHKNDERFFDLKTVKYIPIYYVLNSSPRYEPIYYQHRLALLINNQHMPYQYYARPAAVRPHVQIPQWQVLPNIYPSTVVRHPCPHPSFIAIPPKKLQEITVIPKINTIATVEPTPIPTPEPTVNNAVIPDASSEFIIASTPETTTVPVTSPVVQKL</sequence>
<organism>
    <name type="scientific">Equus caballus</name>
    <name type="common">Horse</name>
    <dbReference type="NCBI Taxonomy" id="9796"/>
    <lineage>
        <taxon>Eukaryota</taxon>
        <taxon>Metazoa</taxon>
        <taxon>Chordata</taxon>
        <taxon>Craniata</taxon>
        <taxon>Vertebrata</taxon>
        <taxon>Euteleostomi</taxon>
        <taxon>Mammalia</taxon>
        <taxon>Eutheria</taxon>
        <taxon>Laurasiatheria</taxon>
        <taxon>Perissodactyla</taxon>
        <taxon>Equidae</taxon>
        <taxon>Equus</taxon>
    </lineage>
</organism>
<dbReference type="EMBL" id="AY040863">
    <property type="protein sequence ID" value="AAK83669.1"/>
    <property type="molecule type" value="mRNA"/>
</dbReference>
<dbReference type="RefSeq" id="NP_001075353.1">
    <property type="nucleotide sequence ID" value="NM_001081884.1"/>
</dbReference>
<dbReference type="RefSeq" id="XP_070117753.1">
    <property type="nucleotide sequence ID" value="XM_070261652.1"/>
</dbReference>
<dbReference type="FunCoup" id="P82187">
    <property type="interactions" value="22"/>
</dbReference>
<dbReference type="STRING" id="9796.ENSECAP00000001235"/>
<dbReference type="GlyCosmos" id="P82187">
    <property type="glycosylation" value="3 sites, No reported glycans"/>
</dbReference>
<dbReference type="PaxDb" id="9796-ENSECAP00000001235"/>
<dbReference type="Ensembl" id="ENSECAT00000001652.3">
    <property type="protein sequence ID" value="ENSECAP00000001235.2"/>
    <property type="gene ID" value="ENSECAG00000001802.3"/>
</dbReference>
<dbReference type="GeneID" id="100033983"/>
<dbReference type="KEGG" id="ecb:100033983"/>
<dbReference type="CTD" id="1448"/>
<dbReference type="VGNC" id="VGNC:51165">
    <property type="gene designation" value="CSN3"/>
</dbReference>
<dbReference type="GeneTree" id="ENSGT00390000009184"/>
<dbReference type="HOGENOM" id="CLU_2170214_0_0_1"/>
<dbReference type="InParanoid" id="P82187"/>
<dbReference type="OMA" id="YYVPNSY"/>
<dbReference type="OrthoDB" id="9836334at2759"/>
<dbReference type="Proteomes" id="UP000002281">
    <property type="component" value="Chromosome 3"/>
</dbReference>
<dbReference type="Bgee" id="ENSECAG00000001802">
    <property type="expression patterns" value="Expressed in trophoblast and 1 other cell type or tissue"/>
</dbReference>
<dbReference type="GO" id="GO:0005615">
    <property type="term" value="C:extracellular space"/>
    <property type="evidence" value="ECO:0000318"/>
    <property type="project" value="GO_Central"/>
</dbReference>
<dbReference type="GO" id="GO:0007595">
    <property type="term" value="P:lactation"/>
    <property type="evidence" value="ECO:0000318"/>
    <property type="project" value="GO_Central"/>
</dbReference>
<dbReference type="GO" id="GO:0050821">
    <property type="term" value="P:protein stabilization"/>
    <property type="evidence" value="ECO:0000318"/>
    <property type="project" value="GO_Central"/>
</dbReference>
<dbReference type="InterPro" id="IPR000117">
    <property type="entry name" value="Casein_kappa"/>
</dbReference>
<dbReference type="PANTHER" id="PTHR11470">
    <property type="entry name" value="KAPPA CASEIN"/>
    <property type="match status" value="1"/>
</dbReference>
<dbReference type="PANTHER" id="PTHR11470:SF2">
    <property type="entry name" value="KAPPA-CASEIN"/>
    <property type="match status" value="1"/>
</dbReference>
<dbReference type="Pfam" id="PF00997">
    <property type="entry name" value="Casein_kappa"/>
    <property type="match status" value="1"/>
</dbReference>
<dbReference type="PIRSF" id="PIRSF002374">
    <property type="entry name" value="Casein_kappa"/>
    <property type="match status" value="1"/>
</dbReference>
<comment type="function">
    <text>Kappa-casein stabilizes micelle formation, preventing casein precipitation in milk.</text>
</comment>
<comment type="subcellular location">
    <subcellularLocation>
        <location>Secreted</location>
    </subcellularLocation>
</comment>
<comment type="tissue specificity">
    <text>Mammary gland specific. Secreted in milk.</text>
</comment>
<comment type="similarity">
    <text evidence="5">Belongs to the kappa-casein family.</text>
</comment>
<proteinExistence type="evidence at protein level"/>
<accession>P82187</accession>
<accession>Q8SPR0</accession>
<name>CASK_HORSE</name>
<feature type="signal peptide" evidence="4">
    <location>
        <begin position="1"/>
        <end position="20"/>
    </location>
</feature>
<feature type="chain" id="PRO_0000004497" description="Kappa-casein">
    <location>
        <begin position="21"/>
        <end position="185"/>
    </location>
</feature>
<feature type="site" description="Cleavage; by chymosin/rennin" evidence="1">
    <location>
        <begin position="117"/>
        <end position="118"/>
    </location>
</feature>
<feature type="modified residue" description="Phosphoserine; alternate" evidence="2">
    <location>
        <position position="161"/>
    </location>
</feature>
<feature type="modified residue" description="Phosphoserine" evidence="3">
    <location>
        <position position="179"/>
    </location>
</feature>
<feature type="glycosylation site" description="O-linked (GalNAc...) threonine" evidence="2">
    <location>
        <position position="143"/>
    </location>
</feature>
<feature type="glycosylation site" description="O-linked (GalNAc...) serine; alternate" evidence="2">
    <location>
        <position position="161"/>
    </location>
</feature>
<feature type="glycosylation site" description="O-linked (GalNAc...) threonine" evidence="2">
    <location>
        <position position="178"/>
    </location>
</feature>
<feature type="sequence conflict" description="In Ref. 2; AA sequence." evidence="5" ref="2">
    <original>TCHKND</original>
    <variation>RCVKNH</variation>
    <location>
        <begin position="29"/>
        <end position="34"/>
    </location>
</feature>
<feature type="sequence conflict" description="In Ref. 2; AA sequence." evidence="5" ref="2">
    <original>C</original>
    <variation>R</variation>
    <location>
        <position position="112"/>
    </location>
</feature>
<feature type="sequence conflict" description="In Ref. 2; AA sequence." evidence="5" ref="2">
    <original>V</original>
    <variation>VV</variation>
    <location>
        <position position="152"/>
    </location>
</feature>
<gene>
    <name type="primary">CSN3</name>
    <name type="synonym">CSN10</name>
</gene>